<reference key="1">
    <citation type="submission" date="2006-08" db="EMBL/GenBank/DDBJ databases">
        <title>Complete sequence of chromosome 1 of Shewanella sp. MR-7.</title>
        <authorList>
            <person name="Copeland A."/>
            <person name="Lucas S."/>
            <person name="Lapidus A."/>
            <person name="Barry K."/>
            <person name="Detter J.C."/>
            <person name="Glavina del Rio T."/>
            <person name="Hammon N."/>
            <person name="Israni S."/>
            <person name="Dalin E."/>
            <person name="Tice H."/>
            <person name="Pitluck S."/>
            <person name="Kiss H."/>
            <person name="Brettin T."/>
            <person name="Bruce D."/>
            <person name="Han C."/>
            <person name="Tapia R."/>
            <person name="Gilna P."/>
            <person name="Schmutz J."/>
            <person name="Larimer F."/>
            <person name="Land M."/>
            <person name="Hauser L."/>
            <person name="Kyrpides N."/>
            <person name="Mikhailova N."/>
            <person name="Nealson K."/>
            <person name="Konstantinidis K."/>
            <person name="Klappenbach J."/>
            <person name="Tiedje J."/>
            <person name="Richardson P."/>
        </authorList>
    </citation>
    <scope>NUCLEOTIDE SEQUENCE [LARGE SCALE GENOMIC DNA]</scope>
    <source>
        <strain>MR-7</strain>
    </source>
</reference>
<gene>
    <name type="ordered locus">Shewmr7_1806</name>
</gene>
<organism>
    <name type="scientific">Shewanella sp. (strain MR-7)</name>
    <dbReference type="NCBI Taxonomy" id="60481"/>
    <lineage>
        <taxon>Bacteria</taxon>
        <taxon>Pseudomonadati</taxon>
        <taxon>Pseudomonadota</taxon>
        <taxon>Gammaproteobacteria</taxon>
        <taxon>Alteromonadales</taxon>
        <taxon>Shewanellaceae</taxon>
        <taxon>Shewanella</taxon>
    </lineage>
</organism>
<dbReference type="EMBL" id="CP000444">
    <property type="protein sequence ID" value="ABI42798.1"/>
    <property type="molecule type" value="Genomic_DNA"/>
</dbReference>
<dbReference type="SMR" id="Q0HVQ7"/>
<dbReference type="ESTHER" id="shesm-y1727">
    <property type="family name" value="abh_upf00227"/>
</dbReference>
<dbReference type="KEGG" id="shm:Shewmr7_1806"/>
<dbReference type="HOGENOM" id="CLU_128769_0_0_6"/>
<dbReference type="Gene3D" id="3.40.50.1820">
    <property type="entry name" value="alpha/beta hydrolase"/>
    <property type="match status" value="1"/>
</dbReference>
<dbReference type="HAMAP" id="MF_01047">
    <property type="entry name" value="UPF0227"/>
    <property type="match status" value="1"/>
</dbReference>
<dbReference type="InterPro" id="IPR029058">
    <property type="entry name" value="AB_hydrolase_fold"/>
</dbReference>
<dbReference type="InterPro" id="IPR022987">
    <property type="entry name" value="UPF0227"/>
</dbReference>
<dbReference type="InterPro" id="IPR008886">
    <property type="entry name" value="UPF0227/Esterase_YqiA"/>
</dbReference>
<dbReference type="NCBIfam" id="NF003431">
    <property type="entry name" value="PRK04940.1"/>
    <property type="match status" value="1"/>
</dbReference>
<dbReference type="PANTHER" id="PTHR35602">
    <property type="entry name" value="ESTERASE YQIA-RELATED"/>
    <property type="match status" value="1"/>
</dbReference>
<dbReference type="PANTHER" id="PTHR35602:SF2">
    <property type="entry name" value="UPF0227 PROTEIN YCFP"/>
    <property type="match status" value="1"/>
</dbReference>
<dbReference type="Pfam" id="PF05728">
    <property type="entry name" value="UPF0227"/>
    <property type="match status" value="1"/>
</dbReference>
<accession>Q0HVQ7</accession>
<name>Y1806_SHESR</name>
<proteinExistence type="inferred from homology"/>
<sequence>MIFYLHGFDATSPGNHEKMRQLQFIDPDVRLISYSTLHPKHDMQHLLKEVAKQMQYSDDPAPLMVGVGLGAYWAERIGFLNGLKSVLINPNLHPEETMQGKIDRPEEYADIANKCVSEFRLKNTHKAMCILSRVDDVLDSQATAEALKPYYPIEWDEIQPHKFPQLATYLPKIKAFKLG</sequence>
<comment type="similarity">
    <text evidence="1">Belongs to the UPF0227 family.</text>
</comment>
<evidence type="ECO:0000255" key="1">
    <source>
        <dbReference type="HAMAP-Rule" id="MF_01047"/>
    </source>
</evidence>
<protein>
    <recommendedName>
        <fullName evidence="1">UPF0227 protein Shewmr7_1806</fullName>
    </recommendedName>
</protein>
<feature type="chain" id="PRO_1000064301" description="UPF0227 protein Shewmr7_1806">
    <location>
        <begin position="1"/>
        <end position="179"/>
    </location>
</feature>